<dbReference type="EMBL" id="CP023323">
    <property type="protein sequence ID" value="ATY60554.1"/>
    <property type="molecule type" value="Genomic_DNA"/>
</dbReference>
<dbReference type="SMR" id="A0A2H4SBS0"/>
<dbReference type="VEuPathDB" id="FungiDB:A9K55_005453"/>
<dbReference type="VEuPathDB" id="FungiDB:CCM_03537"/>
<dbReference type="OMA" id="MCCILPI"/>
<dbReference type="OrthoDB" id="10430at474943"/>
<dbReference type="Proteomes" id="UP000323067">
    <property type="component" value="Chromosome vi"/>
</dbReference>
<dbReference type="GO" id="GO:0005576">
    <property type="term" value="C:extracellular region"/>
    <property type="evidence" value="ECO:0007669"/>
    <property type="project" value="UniProtKB-KW"/>
</dbReference>
<dbReference type="CDD" id="cd23508">
    <property type="entry name" value="hydrophobin_II"/>
    <property type="match status" value="1"/>
</dbReference>
<dbReference type="Gene3D" id="3.20.120.10">
    <property type="entry name" value="Hydrophobin"/>
    <property type="match status" value="1"/>
</dbReference>
<dbReference type="InterPro" id="IPR010636">
    <property type="entry name" value="Cerato-ulmin_hydrophobin"/>
</dbReference>
<dbReference type="InterPro" id="IPR036686">
    <property type="entry name" value="Hydrophobin_sf"/>
</dbReference>
<dbReference type="PANTHER" id="PTHR42341">
    <property type="entry name" value="HYDROPHOBIN"/>
    <property type="match status" value="1"/>
</dbReference>
<dbReference type="PANTHER" id="PTHR42341:SF1">
    <property type="entry name" value="HYDROPHOBIN"/>
    <property type="match status" value="1"/>
</dbReference>
<dbReference type="Pfam" id="PF06766">
    <property type="entry name" value="Hydrophobin_2"/>
    <property type="match status" value="1"/>
</dbReference>
<dbReference type="SUPFAM" id="SSF101751">
    <property type="entry name" value="Hydrophobin II, HfbII"/>
    <property type="match status" value="1"/>
</dbReference>
<sequence length="105" mass="10572">MQVLLIATLVASVLAAPTEVSPQTSGGGGGGGGGGGVCRGFLYSNPICCATDILGLACLDGDTPPETPRDAKNFKEICAKNGQQARCCVLPIIDQAVLCIRPLGV</sequence>
<proteinExistence type="evidence at protein level"/>
<evidence type="ECO:0000250" key="1">
    <source>
        <dbReference type="UniProtKB" id="P16933"/>
    </source>
</evidence>
<evidence type="ECO:0000250" key="2">
    <source>
        <dbReference type="UniProtKB" id="P52754"/>
    </source>
</evidence>
<evidence type="ECO:0000255" key="3"/>
<evidence type="ECO:0000269" key="4">
    <source>
    </source>
</evidence>
<evidence type="ECO:0000269" key="5">
    <source>
    </source>
</evidence>
<evidence type="ECO:0000269" key="6">
    <source>
    </source>
</evidence>
<evidence type="ECO:0000303" key="7">
    <source>
    </source>
</evidence>
<evidence type="ECO:0000305" key="8"/>
<evidence type="ECO:0000305" key="9">
    <source>
    </source>
</evidence>
<gene>
    <name evidence="7" type="primary">HYD1</name>
    <name type="ORF">A9K55_005453</name>
</gene>
<protein>
    <recommendedName>
        <fullName evidence="7">Class II hydrophobin 1</fullName>
    </recommendedName>
</protein>
<keyword id="KW-0134">Cell wall</keyword>
<keyword id="KW-0183">Conidiation</keyword>
<keyword id="KW-1015">Disulfide bond</keyword>
<keyword id="KW-0964">Secreted</keyword>
<keyword id="KW-0732">Signal</keyword>
<keyword id="KW-0749">Sporulation</keyword>
<keyword id="KW-0843">Virulence</keyword>
<feature type="signal peptide" evidence="3">
    <location>
        <begin position="1"/>
        <end position="15"/>
    </location>
</feature>
<feature type="chain" id="PRO_5014170264" description="Class II hydrophobin 1">
    <location>
        <begin position="16"/>
        <end position="105"/>
    </location>
</feature>
<feature type="disulfide bond" evidence="1">
    <location>
        <begin position="38"/>
        <end position="87"/>
    </location>
</feature>
<feature type="disulfide bond" evidence="1">
    <location>
        <begin position="48"/>
        <end position="78"/>
    </location>
</feature>
<feature type="disulfide bond" evidence="1">
    <location>
        <begin position="49"/>
        <end position="58"/>
    </location>
</feature>
<feature type="disulfide bond" evidence="1">
    <location>
        <begin position="88"/>
        <end position="99"/>
    </location>
</feature>
<organism>
    <name type="scientific">Cordyceps militaris</name>
    <name type="common">Caterpillar fungus</name>
    <name type="synonym">Clavaria militaris</name>
    <dbReference type="NCBI Taxonomy" id="73501"/>
    <lineage>
        <taxon>Eukaryota</taxon>
        <taxon>Fungi</taxon>
        <taxon>Dikarya</taxon>
        <taxon>Ascomycota</taxon>
        <taxon>Pezizomycotina</taxon>
        <taxon>Sordariomycetes</taxon>
        <taxon>Hypocreomycetidae</taxon>
        <taxon>Hypocreales</taxon>
        <taxon>Cordycipitaceae</taxon>
        <taxon>Cordyceps</taxon>
    </lineage>
</organism>
<comment type="function">
    <text evidence="4 5 6 8">Aerial growth, conidiation, and dispersal of filamentous fungi in the environment rely upon a capability of their secreting small amphipathic proteins called hydrophobins (HPBs) with low sequence identity. Class I can self-assemble into an outermost layer of rodlet bundles on aerial cell surfaces, conferring cellular hydrophobicity that supports fungal growth, development and dispersal; whereas Class II form highly ordered films at water-air interfaces through intermolecular interactions but contribute nothing to the rodlet structure (Probable). HYD1 is a class II hydrophobin that plays roles in conidiation and cuticle-bypassing infection by regulating the transcripts of frequency clock protein frq, and velvet protein vosA, as well as primordium formation via the mitogen-activated protein kinase signaling pathway (PubMed:33440688, PubMed:34436213). Also participates in stress response, including tolerance of mycelia to osmotic and oxidative stresses, and conidia to high or low temperature (PubMed:34436213). Acts as a defensive factor against Calcarisporium cordycipiticola infection, probably via the formation of a physical barrier to inhibit the pathogen infection owing to its hydrophobicity or binding to the effector of C.cordycipiticola, hindering the recognition of the pathogen (PubMed:37807760). Finally, regulates the transcription of the AreA transcription factor at different developmental stages via a positive feedback loop (PubMed:34436213).</text>
</comment>
<comment type="subunit">
    <text evidence="2">Homotetramer (By similarity). Further self-assembles to form highly ordered films at water-air interfaces through intermolecular interactions (By similarity).</text>
</comment>
<comment type="subcellular location">
    <subcellularLocation>
        <location evidence="9">Secreted</location>
        <location evidence="9">Cell wall</location>
    </subcellularLocation>
    <subcellularLocation>
        <location evidence="9">Secreted</location>
    </subcellularLocation>
</comment>
<comment type="induction">
    <text evidence="4 5">Highly expressed during the whole fruiting body development with a 13.14-fold increase at the sclerotium stage compared with the hyphal stage (PubMed:33440688). Expression is regulated by the GATA transcription factor AreA (PubMed:34436213).</text>
</comment>
<comment type="disruption phenotype">
    <text evidence="5">Results in reduction in aerial mycelia, conidiation, hydrophobicity and infection ability, and complete inhibition of pigmentation and primordium differentiation.</text>
</comment>
<comment type="biotechnology">
    <text evidence="6">Cordyceps militaris is one of the famous mushrooms in East Asia widely used for his medicinal properties due to the chemical constituents present in the mushroom, namely cordycepin, cordymin, polysaccharides, glycoprotein, ergosterol, and other extracts. Fungal disease of Cordyceps militaris caused by Calcarisporium cordycipiticola is destructive to fruiting body cultivation, resulting in significant economic loss and potential food safety risks. Overexpression of HYD1 leads to enhancement of disease resistance with negligible effect on the agronomic traits of Cordyceps militaris.</text>
</comment>
<comment type="similarity">
    <text evidence="8">Belongs to the cerato-ulmin hydrophobin family.</text>
</comment>
<accession>A0A2H4SBS0</accession>
<reference key="1">
    <citation type="journal article" date="2017" name="BMC Genomics">
        <title>Chromosome level assembly and secondary metabolite potential of the parasitic fungus Cordyceps militaris.</title>
        <authorList>
            <person name="Kramer G.J."/>
            <person name="Nodwell J.R."/>
        </authorList>
    </citation>
    <scope>NUCLEOTIDE SEQUENCE [LARGE SCALE GENOMIC DNA]</scope>
    <source>
        <strain>ATCC 34164</strain>
    </source>
</reference>
<reference key="2">
    <citation type="journal article" date="2021" name="Int. J. Mol. Sci.">
        <title>Cysteine-Rich Hydrophobin Gene Family: Genome Wide Analysis, Phylogeny and Transcript Profiling in Cordyceps militaris.</title>
        <authorList>
            <person name="Li X."/>
            <person name="Wang F."/>
            <person name="Xu Y."/>
            <person name="Liu G."/>
            <person name="Dong C."/>
        </authorList>
    </citation>
    <scope>FUNCTION</scope>
    <scope>INDUCTION</scope>
</reference>
<reference key="3">
    <citation type="journal article" date="2021" name="J. Fungi">
        <title>Hydrophobin CmHYD1 Is Involved in Conidiation, Infection and Primordium Formation, and Regulated by GATA Transcription Factor CmAreA in Edible Fungus, Cordyceps militaris.</title>
        <authorList>
            <person name="Li X."/>
            <person name="Wang F."/>
            <person name="Liu M."/>
            <person name="Dong C."/>
        </authorList>
    </citation>
    <scope>FUNCTION</scope>
    <scope>DISRUPTION PHENOTYPE</scope>
    <scope>INDUCTION</scope>
</reference>
<reference key="4">
    <citation type="journal article" date="2023" name="J. Agric. Food Chem.">
        <title>Safe-Harbor-Targeted CRISPR/Cas9 System and Cmhyd1 Overexpression Enhances Disease Resistance in Cordyceps militaris.</title>
        <authorList>
            <person name="Liu Q."/>
            <person name="Meng G."/>
            <person name="Wang M."/>
            <person name="Li X."/>
            <person name="Liu M."/>
            <person name="Wang F."/>
            <person name="Yang Y."/>
            <person name="Dong C."/>
        </authorList>
    </citation>
    <scope>FUNCTION</scope>
</reference>
<name>HYD1_CORMI</name>